<comment type="function">
    <text evidence="1">This protein is one of the two subunits of integration host factor, a specific DNA-binding protein that functions in genetic recombination as well as in transcriptional and translational control.</text>
</comment>
<comment type="subunit">
    <text evidence="1">Heterodimer of an alpha and a beta chain.</text>
</comment>
<comment type="similarity">
    <text evidence="1">Belongs to the bacterial histone-like protein family.</text>
</comment>
<keyword id="KW-0233">DNA recombination</keyword>
<keyword id="KW-0238">DNA-binding</keyword>
<keyword id="KW-1185">Reference proteome</keyword>
<keyword id="KW-0804">Transcription</keyword>
<keyword id="KW-0805">Transcription regulation</keyword>
<keyword id="KW-0810">Translation regulation</keyword>
<sequence length="123" mass="13677">MEFSVESLETPALTKAHLAELLFEQIGLNKRESKEMIDAFFELISDRLVEGKDVKISGFGNFQIRTKAPRPGRNPRTGEAIPIESRRVVTFHASHKLKEQIQGSALLGLKTANIFAEDNGPVT</sequence>
<proteinExistence type="inferred from homology"/>
<evidence type="ECO:0000255" key="1">
    <source>
        <dbReference type="HAMAP-Rule" id="MF_00380"/>
    </source>
</evidence>
<feature type="chain" id="PRO_1000060554" description="Integration host factor subunit alpha">
    <location>
        <begin position="1"/>
        <end position="123"/>
    </location>
</feature>
<dbReference type="EMBL" id="CP000529">
    <property type="protein sequence ID" value="ABM38149.1"/>
    <property type="molecule type" value="Genomic_DNA"/>
</dbReference>
<dbReference type="RefSeq" id="WP_011802226.1">
    <property type="nucleotide sequence ID" value="NC_008781.1"/>
</dbReference>
<dbReference type="SMR" id="A1VR71"/>
<dbReference type="STRING" id="365044.Pnap_2848"/>
<dbReference type="KEGG" id="pna:Pnap_2848"/>
<dbReference type="eggNOG" id="COG0776">
    <property type="taxonomic scope" value="Bacteria"/>
</dbReference>
<dbReference type="HOGENOM" id="CLU_105066_1_0_4"/>
<dbReference type="OrthoDB" id="9797747at2"/>
<dbReference type="Proteomes" id="UP000000644">
    <property type="component" value="Chromosome"/>
</dbReference>
<dbReference type="GO" id="GO:0005829">
    <property type="term" value="C:cytosol"/>
    <property type="evidence" value="ECO:0007669"/>
    <property type="project" value="TreeGrafter"/>
</dbReference>
<dbReference type="GO" id="GO:0003677">
    <property type="term" value="F:DNA binding"/>
    <property type="evidence" value="ECO:0007669"/>
    <property type="project" value="UniProtKB-UniRule"/>
</dbReference>
<dbReference type="GO" id="GO:0030527">
    <property type="term" value="F:structural constituent of chromatin"/>
    <property type="evidence" value="ECO:0007669"/>
    <property type="project" value="InterPro"/>
</dbReference>
<dbReference type="GO" id="GO:0006310">
    <property type="term" value="P:DNA recombination"/>
    <property type="evidence" value="ECO:0007669"/>
    <property type="project" value="UniProtKB-UniRule"/>
</dbReference>
<dbReference type="GO" id="GO:0009893">
    <property type="term" value="P:positive regulation of metabolic process"/>
    <property type="evidence" value="ECO:0007669"/>
    <property type="project" value="UniProtKB-ARBA"/>
</dbReference>
<dbReference type="GO" id="GO:0006355">
    <property type="term" value="P:regulation of DNA-templated transcription"/>
    <property type="evidence" value="ECO:0007669"/>
    <property type="project" value="UniProtKB-UniRule"/>
</dbReference>
<dbReference type="GO" id="GO:0006417">
    <property type="term" value="P:regulation of translation"/>
    <property type="evidence" value="ECO:0007669"/>
    <property type="project" value="UniProtKB-UniRule"/>
</dbReference>
<dbReference type="CDD" id="cd13835">
    <property type="entry name" value="IHF_A"/>
    <property type="match status" value="1"/>
</dbReference>
<dbReference type="Gene3D" id="4.10.520.10">
    <property type="entry name" value="IHF-like DNA-binding proteins"/>
    <property type="match status" value="1"/>
</dbReference>
<dbReference type="HAMAP" id="MF_00380">
    <property type="entry name" value="IHF_alpha"/>
    <property type="match status" value="1"/>
</dbReference>
<dbReference type="InterPro" id="IPR000119">
    <property type="entry name" value="Hist_DNA-bd"/>
</dbReference>
<dbReference type="InterPro" id="IPR020816">
    <property type="entry name" value="Histone-like_DNA-bd_CS"/>
</dbReference>
<dbReference type="InterPro" id="IPR010992">
    <property type="entry name" value="IHF-like_DNA-bd_dom_sf"/>
</dbReference>
<dbReference type="InterPro" id="IPR005684">
    <property type="entry name" value="IHF_alpha"/>
</dbReference>
<dbReference type="NCBIfam" id="TIGR00987">
    <property type="entry name" value="himA"/>
    <property type="match status" value="1"/>
</dbReference>
<dbReference type="NCBIfam" id="NF001401">
    <property type="entry name" value="PRK00285.1"/>
    <property type="match status" value="1"/>
</dbReference>
<dbReference type="PANTHER" id="PTHR33175">
    <property type="entry name" value="DNA-BINDING PROTEIN HU"/>
    <property type="match status" value="1"/>
</dbReference>
<dbReference type="PANTHER" id="PTHR33175:SF2">
    <property type="entry name" value="INTEGRATION HOST FACTOR SUBUNIT ALPHA"/>
    <property type="match status" value="1"/>
</dbReference>
<dbReference type="Pfam" id="PF00216">
    <property type="entry name" value="Bac_DNA_binding"/>
    <property type="match status" value="1"/>
</dbReference>
<dbReference type="PRINTS" id="PR01727">
    <property type="entry name" value="DNABINDINGHU"/>
</dbReference>
<dbReference type="SMART" id="SM00411">
    <property type="entry name" value="BHL"/>
    <property type="match status" value="1"/>
</dbReference>
<dbReference type="SUPFAM" id="SSF47729">
    <property type="entry name" value="IHF-like DNA-binding proteins"/>
    <property type="match status" value="1"/>
</dbReference>
<dbReference type="PROSITE" id="PS00045">
    <property type="entry name" value="HISTONE_LIKE"/>
    <property type="match status" value="1"/>
</dbReference>
<name>IHFA_POLNA</name>
<accession>A1VR71</accession>
<gene>
    <name evidence="1" type="primary">ihfA</name>
    <name evidence="1" type="synonym">himA</name>
    <name type="ordered locus">Pnap_2848</name>
</gene>
<organism>
    <name type="scientific">Polaromonas naphthalenivorans (strain CJ2)</name>
    <dbReference type="NCBI Taxonomy" id="365044"/>
    <lineage>
        <taxon>Bacteria</taxon>
        <taxon>Pseudomonadati</taxon>
        <taxon>Pseudomonadota</taxon>
        <taxon>Betaproteobacteria</taxon>
        <taxon>Burkholderiales</taxon>
        <taxon>Comamonadaceae</taxon>
        <taxon>Polaromonas</taxon>
    </lineage>
</organism>
<reference key="1">
    <citation type="journal article" date="2009" name="Environ. Microbiol.">
        <title>The genome of Polaromonas naphthalenivorans strain CJ2, isolated from coal tar-contaminated sediment, reveals physiological and metabolic versatility and evolution through extensive horizontal gene transfer.</title>
        <authorList>
            <person name="Yagi J.M."/>
            <person name="Sims D."/>
            <person name="Brettin T."/>
            <person name="Bruce D."/>
            <person name="Madsen E.L."/>
        </authorList>
    </citation>
    <scope>NUCLEOTIDE SEQUENCE [LARGE SCALE GENOMIC DNA]</scope>
    <source>
        <strain>CJ2</strain>
    </source>
</reference>
<protein>
    <recommendedName>
        <fullName evidence="1">Integration host factor subunit alpha</fullName>
        <shortName evidence="1">IHF-alpha</shortName>
    </recommendedName>
</protein>